<dbReference type="EMBL" id="AY151834">
    <property type="protein sequence ID" value="AAN72218.1"/>
    <property type="molecule type" value="mRNA"/>
</dbReference>
<dbReference type="EMBL" id="BC081699">
    <property type="protein sequence ID" value="AAH81699.1"/>
    <property type="molecule type" value="mRNA"/>
</dbReference>
<dbReference type="RefSeq" id="NP_757377.1">
    <property type="nucleotide sequence ID" value="NM_172223.2"/>
</dbReference>
<dbReference type="FunCoup" id="P59382">
    <property type="interactions" value="312"/>
</dbReference>
<dbReference type="STRING" id="10116.ENSRNOP00000022914"/>
<dbReference type="GlyCosmos" id="P59382">
    <property type="glycosylation" value="1 site, No reported glycans"/>
</dbReference>
<dbReference type="GlyGen" id="P59382">
    <property type="glycosylation" value="1 site"/>
</dbReference>
<dbReference type="iPTMnet" id="P59382"/>
<dbReference type="PhosphoSitePlus" id="P59382"/>
<dbReference type="PaxDb" id="10116-ENSRNOP00000022914"/>
<dbReference type="Ensembl" id="ENSRNOT00000022914.6">
    <property type="protein sequence ID" value="ENSRNOP00000022914.4"/>
    <property type="gene ID" value="ENSRNOG00000016975.6"/>
</dbReference>
<dbReference type="GeneID" id="282634"/>
<dbReference type="KEGG" id="rno:282634"/>
<dbReference type="UCSC" id="RGD:628782">
    <property type="organism name" value="rat"/>
</dbReference>
<dbReference type="AGR" id="RGD:628782"/>
<dbReference type="CTD" id="11264"/>
<dbReference type="RGD" id="628782">
    <property type="gene designation" value="Pxmp4"/>
</dbReference>
<dbReference type="eggNOG" id="ENOG502RXMH">
    <property type="taxonomic scope" value="Eukaryota"/>
</dbReference>
<dbReference type="GeneTree" id="ENSGT00390000001562"/>
<dbReference type="HOGENOM" id="CLU_054132_1_0_1"/>
<dbReference type="InParanoid" id="P59382"/>
<dbReference type="OMA" id="VMVFLFR"/>
<dbReference type="OrthoDB" id="39659at2759"/>
<dbReference type="PhylomeDB" id="P59382"/>
<dbReference type="TreeFam" id="TF105313"/>
<dbReference type="Reactome" id="R-RNO-9603798">
    <property type="pathway name" value="Class I peroxisomal membrane protein import"/>
</dbReference>
<dbReference type="PRO" id="PR:P59382"/>
<dbReference type="Proteomes" id="UP000002494">
    <property type="component" value="Chromosome 3"/>
</dbReference>
<dbReference type="Bgee" id="ENSRNOG00000016975">
    <property type="expression patterns" value="Expressed in adult mammalian kidney and 18 other cell types or tissues"/>
</dbReference>
<dbReference type="GO" id="GO:0005778">
    <property type="term" value="C:peroxisomal membrane"/>
    <property type="evidence" value="ECO:0000314"/>
    <property type="project" value="UniProtKB"/>
</dbReference>
<dbReference type="GO" id="GO:0046485">
    <property type="term" value="P:ether lipid metabolic process"/>
    <property type="evidence" value="ECO:0000266"/>
    <property type="project" value="RGD"/>
</dbReference>
<dbReference type="InterPro" id="IPR019531">
    <property type="entry name" value="Pmp4"/>
</dbReference>
<dbReference type="PANTHER" id="PTHR15460">
    <property type="entry name" value="PEROXISOMAL MEMBRANE PROTEIN 4"/>
    <property type="match status" value="1"/>
</dbReference>
<dbReference type="PANTHER" id="PTHR15460:SF3">
    <property type="entry name" value="PEROXISOMAL MEMBRANE PROTEIN 4"/>
    <property type="match status" value="1"/>
</dbReference>
<dbReference type="Pfam" id="PF02466">
    <property type="entry name" value="Tim17"/>
    <property type="match status" value="1"/>
</dbReference>
<dbReference type="PIRSF" id="PIRSF013674">
    <property type="entry name" value="PXMP4"/>
    <property type="match status" value="1"/>
</dbReference>
<sequence length="212" mass="24136">MAAPPQLRALLQAVNKLLRQRRYHAALAVIKGFRNGAVYGVKIRAPHALVMTFLFRSGSLQEKLQAILKATYTHSRNLACFVFTYKSLQALQSHVQGGTHQMHSFLAAFIGGLLLFGENNNINSQINMYLTSRVLFALCRLGVEKGYIPALKWDPFPLHTAVIWGLVLWLFEYHRPTLQPSLQSSMTYLYEDSNVWHDLSDFLIFNKSRPSK</sequence>
<evidence type="ECO:0000250" key="1"/>
<evidence type="ECO:0000255" key="2"/>
<evidence type="ECO:0000269" key="3">
    <source>
    </source>
</evidence>
<evidence type="ECO:0000305" key="4"/>
<protein>
    <recommendedName>
        <fullName>Peroxisomal membrane protein 4</fullName>
    </recommendedName>
    <alternativeName>
        <fullName>24 kDa peroxisomal intrinsic membrane protein</fullName>
    </alternativeName>
</protein>
<name>PXMP4_RAT</name>
<gene>
    <name type="primary">Pxmp4</name>
    <name type="synonym">Pmp24</name>
</gene>
<comment type="subunit">
    <text evidence="1">Interacts with PEX19.</text>
</comment>
<comment type="subcellular location">
    <subcellularLocation>
        <location>Peroxisome membrane</location>
        <topology>Multi-pass membrane protein</topology>
    </subcellularLocation>
</comment>
<comment type="tissue specificity">
    <text>Liver.</text>
</comment>
<comment type="similarity">
    <text evidence="4">Belongs to the peroxisomal membrane protein PXMP2/4 family.</text>
</comment>
<feature type="initiator methionine" description="Removed" evidence="3">
    <location>
        <position position="1"/>
    </location>
</feature>
<feature type="chain" id="PRO_0000218934" description="Peroxisomal membrane protein 4">
    <location>
        <begin position="2"/>
        <end position="212"/>
    </location>
</feature>
<feature type="transmembrane region" description="Helical" evidence="2">
    <location>
        <begin position="97"/>
        <end position="117"/>
    </location>
</feature>
<feature type="transmembrane region" description="Helical" evidence="2">
    <location>
        <begin position="151"/>
        <end position="171"/>
    </location>
</feature>
<feature type="glycosylation site" description="N-linked (GlcNAc...) asparagine" evidence="2">
    <location>
        <position position="206"/>
    </location>
</feature>
<reference key="1">
    <citation type="submission" date="2002-09" db="EMBL/GenBank/DDBJ databases">
        <title>A new Rattus norvegicus gene is highly homologous to Mus musculus PMP24 protein.</title>
        <authorList>
            <person name="Yao R."/>
            <person name="Wang Y."/>
            <person name="You M."/>
        </authorList>
    </citation>
    <scope>NUCLEOTIDE SEQUENCE [MRNA]</scope>
    <source>
        <strain>Fischer 344</strain>
    </source>
</reference>
<reference key="2">
    <citation type="journal article" date="2004" name="Genome Res.">
        <title>The status, quality, and expansion of the NIH full-length cDNA project: the Mammalian Gene Collection (MGC).</title>
        <authorList>
            <consortium name="The MGC Project Team"/>
        </authorList>
    </citation>
    <scope>NUCLEOTIDE SEQUENCE [LARGE SCALE MRNA]</scope>
    <source>
        <tissue>Heart</tissue>
    </source>
</reference>
<reference key="3">
    <citation type="journal article" date="1999" name="Biochim. Biophys. Acta">
        <title>Identification of a 24 kDa intrinsic membrane protein from mammalian peroxisomes.</title>
        <authorList>
            <person name="Reguenga C."/>
            <person name="Oliveira M.E.M."/>
            <person name="Gouveia A.M.M."/>
            <person name="Eckerskorn C."/>
            <person name="Sa-Miranda C."/>
            <person name="Azevedo J.E."/>
        </authorList>
    </citation>
    <scope>PROTEIN SEQUENCE OF 2-14</scope>
    <scope>CHARACTERIZATION</scope>
    <source>
        <tissue>Liver</tissue>
    </source>
</reference>
<accession>P59382</accession>
<proteinExistence type="evidence at protein level"/>
<keyword id="KW-0903">Direct protein sequencing</keyword>
<keyword id="KW-0325">Glycoprotein</keyword>
<keyword id="KW-0472">Membrane</keyword>
<keyword id="KW-0576">Peroxisome</keyword>
<keyword id="KW-1185">Reference proteome</keyword>
<keyword id="KW-0812">Transmembrane</keyword>
<keyword id="KW-1133">Transmembrane helix</keyword>
<organism>
    <name type="scientific">Rattus norvegicus</name>
    <name type="common">Rat</name>
    <dbReference type="NCBI Taxonomy" id="10116"/>
    <lineage>
        <taxon>Eukaryota</taxon>
        <taxon>Metazoa</taxon>
        <taxon>Chordata</taxon>
        <taxon>Craniata</taxon>
        <taxon>Vertebrata</taxon>
        <taxon>Euteleostomi</taxon>
        <taxon>Mammalia</taxon>
        <taxon>Eutheria</taxon>
        <taxon>Euarchontoglires</taxon>
        <taxon>Glires</taxon>
        <taxon>Rodentia</taxon>
        <taxon>Myomorpha</taxon>
        <taxon>Muroidea</taxon>
        <taxon>Muridae</taxon>
        <taxon>Murinae</taxon>
        <taxon>Rattus</taxon>
    </lineage>
</organism>